<gene>
    <name type="ORF">ORF3a</name>
</gene>
<sequence>MENTKTNASSSGMSSSSSFSVSYAEEMLLADEVSKTNSMSILGPNQLKLCTQLVLSNGAAPVVLSLVSKEKKSILNRMLPKIGQRMYVHHSAIYLLYMPNILKSSSGSITLKLFNEATGELVDVDTDHDATQACIFAGRYPRSILAKDAAKGHDLKLVVHAVASTNMNSAVGVLYPIWEDELSRKQILERGADFLKFPIAKTEPVRDLLNAGKLTDFVLNRTRLGVGSKSDPSPVLLEPRAKIAGKAKTLFIPEGPSVPSTTINGMAPTVRIDAGSPKGLGVPKGFTYESFIKDEILPDH</sequence>
<organism>
    <name type="scientific">Alfalfa mosaic virus (strain 425 / isolate Leiden)</name>
    <dbReference type="NCBI Taxonomy" id="12322"/>
    <lineage>
        <taxon>Viruses</taxon>
        <taxon>Riboviria</taxon>
        <taxon>Orthornavirae</taxon>
        <taxon>Kitrinoviricota</taxon>
        <taxon>Alsuviricetes</taxon>
        <taxon>Martellivirales</taxon>
        <taxon>Bromoviridae</taxon>
        <taxon>Alfamovirus</taxon>
        <taxon>Alfalfa mosaic virus</taxon>
    </lineage>
</organism>
<feature type="chain" id="PRO_0000083226" description="Movement protein">
    <location>
        <begin position="1"/>
        <end position="300"/>
    </location>
</feature>
<accession>P03595</accession>
<evidence type="ECO:0000269" key="1">
    <source>
    </source>
</evidence>
<evidence type="ECO:0000305" key="2"/>
<dbReference type="EMBL" id="K03542">
    <property type="protein sequence ID" value="AAA46295.1"/>
    <property type="molecule type" value="Genomic_RNA"/>
</dbReference>
<dbReference type="GO" id="GO:0044219">
    <property type="term" value="C:host cell plasmodesma"/>
    <property type="evidence" value="ECO:0007669"/>
    <property type="project" value="UniProtKB-SubCell"/>
</dbReference>
<dbReference type="GO" id="GO:0046740">
    <property type="term" value="P:transport of virus in host, cell to cell"/>
    <property type="evidence" value="ECO:0007669"/>
    <property type="project" value="UniProtKB-KW"/>
</dbReference>
<dbReference type="InterPro" id="IPR002538">
    <property type="entry name" value="Bromo_MP"/>
</dbReference>
<dbReference type="Pfam" id="PF01573">
    <property type="entry name" value="Bromo_MP"/>
    <property type="match status" value="1"/>
</dbReference>
<name>MVP_AMVLE</name>
<keyword id="KW-1031">Host cell junction</keyword>
<keyword id="KW-0813">Transport</keyword>
<keyword id="KW-0916">Viral movement protein</keyword>
<organismHost>
    <name type="scientific">Apium graveolens</name>
    <name type="common">Celery</name>
    <dbReference type="NCBI Taxonomy" id="4045"/>
</organismHost>
<organismHost>
    <name type="scientific">Astragalus glycyphyllos</name>
    <name type="common">Wild liquorice</name>
    <dbReference type="NCBI Taxonomy" id="83862"/>
</organismHost>
<organismHost>
    <name type="scientific">Capsicum annuum</name>
    <name type="common">Capsicum pepper</name>
    <dbReference type="NCBI Taxonomy" id="4072"/>
</organismHost>
<organismHost>
    <name type="scientific">Caryopteris incana</name>
    <dbReference type="NCBI Taxonomy" id="41386"/>
</organismHost>
<organismHost>
    <name type="scientific">Cicer arietinum</name>
    <name type="common">Chickpea</name>
    <name type="synonym">Garbanzo</name>
    <dbReference type="NCBI Taxonomy" id="3827"/>
</organismHost>
<organismHost>
    <name type="scientific">Glycine max</name>
    <name type="common">Soybean</name>
    <name type="synonym">Glycine hispida</name>
    <dbReference type="NCBI Taxonomy" id="3847"/>
</organismHost>
<organismHost>
    <name type="scientific">Lablab purpureus</name>
    <name type="common">Hyacinth bean</name>
    <name type="synonym">Dolichos lablab</name>
    <dbReference type="NCBI Taxonomy" id="35936"/>
</organismHost>
<organismHost>
    <name type="scientific">Lactuca sativa</name>
    <name type="common">Garden lettuce</name>
    <dbReference type="NCBI Taxonomy" id="4236"/>
</organismHost>
<organismHost>
    <name type="scientific">Lens culinaris</name>
    <name type="common">Lentil</name>
    <name type="synonym">Cicer lens</name>
    <dbReference type="NCBI Taxonomy" id="3864"/>
</organismHost>
<organismHost>
    <name type="scientific">Lupinus</name>
    <dbReference type="NCBI Taxonomy" id="3869"/>
</organismHost>
<organismHost>
    <name type="scientific">Malva parviflora</name>
    <name type="common">Little mallow</name>
    <name type="synonym">Cheeseweed mallow</name>
    <dbReference type="NCBI Taxonomy" id="145753"/>
</organismHost>
<organismHost>
    <name type="scientific">Medicago sativa</name>
    <name type="common">Alfalfa</name>
    <dbReference type="NCBI Taxonomy" id="3879"/>
</organismHost>
<organismHost>
    <name type="scientific">Nicotiana tabacum</name>
    <name type="common">Common tobacco</name>
    <dbReference type="NCBI Taxonomy" id="4097"/>
</organismHost>
<organismHost>
    <name type="scientific">Phaseolus vulgaris</name>
    <name type="common">Kidney bean</name>
    <name type="synonym">French bean</name>
    <dbReference type="NCBI Taxonomy" id="3885"/>
</organismHost>
<organismHost>
    <name type="scientific">Philadelphus</name>
    <dbReference type="NCBI Taxonomy" id="23113"/>
</organismHost>
<organismHost>
    <name type="scientific">Pisum sativum</name>
    <name type="common">Garden pea</name>
    <name type="synonym">Lathyrus oleraceus</name>
    <dbReference type="NCBI Taxonomy" id="3888"/>
</organismHost>
<organismHost>
    <name type="scientific">Solanum lycopersicum</name>
    <name type="common">Tomato</name>
    <name type="synonym">Lycopersicon esculentum</name>
    <dbReference type="NCBI Taxonomy" id="4081"/>
</organismHost>
<organismHost>
    <name type="scientific">Solanum tuberosum</name>
    <name type="common">Potato</name>
    <dbReference type="NCBI Taxonomy" id="4113"/>
</organismHost>
<organismHost>
    <name type="scientific">Teramnus repens</name>
    <dbReference type="NCBI Taxonomy" id="157662"/>
</organismHost>
<organismHost>
    <name type="scientific">Trifolium incarnatum</name>
    <name type="common">Crimson clover</name>
    <dbReference type="NCBI Taxonomy" id="60916"/>
</organismHost>
<organismHost>
    <name type="scientific">Viburnum opulus</name>
    <name type="common">High-bush cranberry</name>
    <dbReference type="NCBI Taxonomy" id="85293"/>
</organismHost>
<organismHost>
    <name type="scientific">Vigna radiata var. radiata</name>
    <name type="common">Mung bean</name>
    <name type="synonym">Phaseolus aureus</name>
    <dbReference type="NCBI Taxonomy" id="3916"/>
</organismHost>
<organismHost>
    <name type="scientific">Vigna unguiculata</name>
    <name type="common">Cowpea</name>
    <dbReference type="NCBI Taxonomy" id="3917"/>
</organismHost>
<comment type="function">
    <text>Transports viral genome to neighboring plant cells directly through plasmosdesmata, without any budding. The movement protein allows efficient cell to cell propagation, by bypassing the host cell wall barrier. Acts by forming a tubular structure at the host plasmodesmata, enlarging it enough to allow free passage of virion capsids.</text>
</comment>
<comment type="subcellular location">
    <subcellularLocation>
        <location evidence="1">Host cell junction</location>
        <location evidence="1">Host plasmodesma</location>
    </subcellularLocation>
    <text>Assembles into long tubular structures at the surface of the infected protoplast.</text>
</comment>
<comment type="similarity">
    <text evidence="2">Belongs to the alfamovirus movement protein family.</text>
</comment>
<proteinExistence type="inferred from homology"/>
<reference key="1">
    <citation type="journal article" date="1986" name="Virology">
        <title>Variable repeats and poly(A)-stretches in the leader sequence of alfalfa mosaic virus RNA 3.</title>
        <authorList>
            <person name="Langereis K."/>
            <person name="Mugnier M.-A."/>
            <person name="Cornelissen B.J.C."/>
            <person name="Pinck L."/>
            <person name="Bol J.F."/>
        </authorList>
    </citation>
    <scope>NUCLEOTIDE SEQUENCE [GENOMIC RNA]</scope>
</reference>
<reference key="2">
    <citation type="journal article" date="1997" name="J. Gen. Virol.">
        <title>Tubule-forming capacity of the movement proteins of alfalfa mosaic virus and brome mosaic virus.</title>
        <authorList>
            <person name="Kasteel D.T."/>
            <person name="van der Wel N.N."/>
            <person name="Jansen K.A."/>
            <person name="Goldbach R.W."/>
            <person name="van Lent J.W."/>
        </authorList>
    </citation>
    <scope>SUBCELLULAR LOCATION</scope>
</reference>
<protein>
    <recommendedName>
        <fullName>Movement protein</fullName>
        <shortName>MP</shortName>
    </recommendedName>
    <alternativeName>
        <fullName>Protein 3A</fullName>
    </alternativeName>
</protein>